<proteinExistence type="inferred from homology"/>
<protein>
    <recommendedName>
        <fullName evidence="1">UPF0335 protein RHECIAT_CH0003797</fullName>
    </recommendedName>
</protein>
<sequence length="87" mass="9947">MSDAHGVARDQLRAFIERIERLEEEKKTIADDIKDVYGEAKGMGFDTKILKKVVALRKKDEQERMEEEAILDTYLHALGMIESPPEG</sequence>
<feature type="chain" id="PRO_1000198481" description="UPF0335 protein RHECIAT_CH0003797">
    <location>
        <begin position="1"/>
        <end position="87"/>
    </location>
</feature>
<accession>B3PZT5</accession>
<organism>
    <name type="scientific">Rhizobium etli (strain CIAT 652)</name>
    <dbReference type="NCBI Taxonomy" id="491916"/>
    <lineage>
        <taxon>Bacteria</taxon>
        <taxon>Pseudomonadati</taxon>
        <taxon>Pseudomonadota</taxon>
        <taxon>Alphaproteobacteria</taxon>
        <taxon>Hyphomicrobiales</taxon>
        <taxon>Rhizobiaceae</taxon>
        <taxon>Rhizobium/Agrobacterium group</taxon>
        <taxon>Rhizobium</taxon>
    </lineage>
</organism>
<dbReference type="EMBL" id="CP001074">
    <property type="protein sequence ID" value="ACE92735.1"/>
    <property type="molecule type" value="Genomic_DNA"/>
</dbReference>
<dbReference type="SMR" id="B3PZT5"/>
<dbReference type="KEGG" id="rec:RHECIAT_CH0003797"/>
<dbReference type="eggNOG" id="COG3750">
    <property type="taxonomic scope" value="Bacteria"/>
</dbReference>
<dbReference type="HOGENOM" id="CLU_158651_3_0_5"/>
<dbReference type="Proteomes" id="UP000008817">
    <property type="component" value="Chromosome"/>
</dbReference>
<dbReference type="GO" id="GO:0003677">
    <property type="term" value="F:DNA binding"/>
    <property type="evidence" value="ECO:0007669"/>
    <property type="project" value="InterPro"/>
</dbReference>
<dbReference type="HAMAP" id="MF_00797">
    <property type="entry name" value="UPF0335"/>
    <property type="match status" value="1"/>
</dbReference>
<dbReference type="InterPro" id="IPR018753">
    <property type="entry name" value="GapR-like"/>
</dbReference>
<dbReference type="InterPro" id="IPR046367">
    <property type="entry name" value="GapR-like_DNA-bd"/>
</dbReference>
<dbReference type="NCBIfam" id="NF010247">
    <property type="entry name" value="PRK13694.1"/>
    <property type="match status" value="1"/>
</dbReference>
<dbReference type="Pfam" id="PF10073">
    <property type="entry name" value="GapR_DNA-bd"/>
    <property type="match status" value="1"/>
</dbReference>
<reference key="1">
    <citation type="journal article" date="2010" name="Appl. Environ. Microbiol.">
        <title>Conserved symbiotic plasmid DNA sequences in the multireplicon pangenomic structure of Rhizobium etli.</title>
        <authorList>
            <person name="Gonzalez V."/>
            <person name="Acosta J.L."/>
            <person name="Santamaria R.I."/>
            <person name="Bustos P."/>
            <person name="Fernandez J.L."/>
            <person name="Hernandez Gonzalez I.L."/>
            <person name="Diaz R."/>
            <person name="Flores M."/>
            <person name="Palacios R."/>
            <person name="Mora J."/>
            <person name="Davila G."/>
        </authorList>
    </citation>
    <scope>NUCLEOTIDE SEQUENCE [LARGE SCALE GENOMIC DNA]</scope>
    <source>
        <strain>CIAT 652</strain>
    </source>
</reference>
<comment type="similarity">
    <text evidence="1">Belongs to the UPF0335 family.</text>
</comment>
<gene>
    <name type="ordered locus">RHECIAT_CH0003797</name>
</gene>
<evidence type="ECO:0000255" key="1">
    <source>
        <dbReference type="HAMAP-Rule" id="MF_00797"/>
    </source>
</evidence>
<name>Y3797_RHIE6</name>